<protein>
    <recommendedName>
        <fullName evidence="1">Isoprenyl transferase</fullName>
        <ecNumber evidence="1">2.5.1.-</ecNumber>
    </recommendedName>
</protein>
<reference key="1">
    <citation type="journal article" date="2003" name="Proc. Natl. Acad. Sci. U.S.A.">
        <title>Genome sequence of the cyanobacterium Prochlorococcus marinus SS120, a nearly minimal oxyphototrophic genome.</title>
        <authorList>
            <person name="Dufresne A."/>
            <person name="Salanoubat M."/>
            <person name="Partensky F."/>
            <person name="Artiguenave F."/>
            <person name="Axmann I.M."/>
            <person name="Barbe V."/>
            <person name="Duprat S."/>
            <person name="Galperin M.Y."/>
            <person name="Koonin E.V."/>
            <person name="Le Gall F."/>
            <person name="Makarova K.S."/>
            <person name="Ostrowski M."/>
            <person name="Oztas S."/>
            <person name="Robert C."/>
            <person name="Rogozin I.B."/>
            <person name="Scanlan D.J."/>
            <person name="Tandeau de Marsac N."/>
            <person name="Weissenbach J."/>
            <person name="Wincker P."/>
            <person name="Wolf Y.I."/>
            <person name="Hess W.R."/>
        </authorList>
    </citation>
    <scope>NUCLEOTIDE SEQUENCE [LARGE SCALE GENOMIC DNA]</scope>
    <source>
        <strain>SARG / CCMP1375 / SS120</strain>
    </source>
</reference>
<gene>
    <name evidence="1" type="primary">uppS</name>
    <name type="ordered locus">Pro_1103</name>
</gene>
<proteinExistence type="inferred from homology"/>
<comment type="function">
    <text evidence="1">Catalyzes the condensation of isopentenyl diphosphate (IPP) with allylic pyrophosphates generating different type of terpenoids.</text>
</comment>
<comment type="cofactor">
    <cofactor evidence="1">
        <name>Mg(2+)</name>
        <dbReference type="ChEBI" id="CHEBI:18420"/>
    </cofactor>
    <text evidence="1">Binds 2 magnesium ions per subunit.</text>
</comment>
<comment type="subunit">
    <text evidence="1">Homodimer.</text>
</comment>
<comment type="similarity">
    <text evidence="1">Belongs to the UPP synthase family.</text>
</comment>
<organism>
    <name type="scientific">Prochlorococcus marinus (strain SARG / CCMP1375 / SS120)</name>
    <dbReference type="NCBI Taxonomy" id="167539"/>
    <lineage>
        <taxon>Bacteria</taxon>
        <taxon>Bacillati</taxon>
        <taxon>Cyanobacteriota</taxon>
        <taxon>Cyanophyceae</taxon>
        <taxon>Synechococcales</taxon>
        <taxon>Prochlorococcaceae</taxon>
        <taxon>Prochlorococcus</taxon>
    </lineage>
</organism>
<evidence type="ECO:0000255" key="1">
    <source>
        <dbReference type="HAMAP-Rule" id="MF_01139"/>
    </source>
</evidence>
<accession>Q7VBI9</accession>
<sequence>MKTPIAIGAEKKSLITPLPASIDPLRLPEHIAIIMDGNGRWANAKKLPRAMGHSAGVDALKQTLRLCNDWGIGVLTVYAFSTENWSRPKEEVNFLMTLFERVLKKELEALNLEEVQISFLGDLDQLPTRLQDLINEATELTSGNNGIRFNVCTNYGGRRELVLAAQKLAQRVLQGDLDPSFIDEHTFAGELLTSSYADPDLLIRTSGEMRISNFLLWQLAYAEIHVTDTLWPDFDSISLTKALIDYQSRRRRFGGVDPTVNDYDQV</sequence>
<feature type="chain" id="PRO_0000123651" description="Isoprenyl transferase">
    <location>
        <begin position="1"/>
        <end position="266"/>
    </location>
</feature>
<feature type="active site" evidence="1">
    <location>
        <position position="36"/>
    </location>
</feature>
<feature type="active site" description="Proton acceptor" evidence="1">
    <location>
        <position position="84"/>
    </location>
</feature>
<feature type="binding site" evidence="1">
    <location>
        <position position="36"/>
    </location>
    <ligand>
        <name>Mg(2+)</name>
        <dbReference type="ChEBI" id="CHEBI:18420"/>
    </ligand>
</feature>
<feature type="binding site" evidence="1">
    <location>
        <begin position="37"/>
        <end position="40"/>
    </location>
    <ligand>
        <name>substrate</name>
    </ligand>
</feature>
<feature type="binding site" evidence="1">
    <location>
        <position position="41"/>
    </location>
    <ligand>
        <name>substrate</name>
    </ligand>
</feature>
<feature type="binding site" evidence="1">
    <location>
        <position position="49"/>
    </location>
    <ligand>
        <name>substrate</name>
    </ligand>
</feature>
<feature type="binding site" evidence="1">
    <location>
        <position position="53"/>
    </location>
    <ligand>
        <name>substrate</name>
    </ligand>
</feature>
<feature type="binding site" evidence="1">
    <location>
        <begin position="81"/>
        <end position="83"/>
    </location>
    <ligand>
        <name>substrate</name>
    </ligand>
</feature>
<feature type="binding site" evidence="1">
    <location>
        <position position="85"/>
    </location>
    <ligand>
        <name>substrate</name>
    </ligand>
</feature>
<feature type="binding site" evidence="1">
    <location>
        <position position="87"/>
    </location>
    <ligand>
        <name>substrate</name>
    </ligand>
</feature>
<feature type="binding site" evidence="1">
    <location>
        <position position="204"/>
    </location>
    <ligand>
        <name>substrate</name>
    </ligand>
</feature>
<feature type="binding site" evidence="1">
    <location>
        <begin position="210"/>
        <end position="212"/>
    </location>
    <ligand>
        <name>substrate</name>
    </ligand>
</feature>
<feature type="binding site" evidence="1">
    <location>
        <position position="223"/>
    </location>
    <ligand>
        <name>Mg(2+)</name>
        <dbReference type="ChEBI" id="CHEBI:18420"/>
    </ligand>
</feature>
<keyword id="KW-0460">Magnesium</keyword>
<keyword id="KW-0479">Metal-binding</keyword>
<keyword id="KW-1185">Reference proteome</keyword>
<keyword id="KW-0808">Transferase</keyword>
<name>ISPT_PROMA</name>
<dbReference type="EC" id="2.5.1.-" evidence="1"/>
<dbReference type="EMBL" id="AE017126">
    <property type="protein sequence ID" value="AAQ00148.1"/>
    <property type="molecule type" value="Genomic_DNA"/>
</dbReference>
<dbReference type="RefSeq" id="NP_875495.1">
    <property type="nucleotide sequence ID" value="NC_005042.1"/>
</dbReference>
<dbReference type="RefSeq" id="WP_011125255.1">
    <property type="nucleotide sequence ID" value="NC_005042.1"/>
</dbReference>
<dbReference type="SMR" id="Q7VBI9"/>
<dbReference type="STRING" id="167539.Pro_1103"/>
<dbReference type="EnsemblBacteria" id="AAQ00148">
    <property type="protein sequence ID" value="AAQ00148"/>
    <property type="gene ID" value="Pro_1103"/>
</dbReference>
<dbReference type="KEGG" id="pma:Pro_1103"/>
<dbReference type="PATRIC" id="fig|167539.5.peg.1153"/>
<dbReference type="eggNOG" id="COG0020">
    <property type="taxonomic scope" value="Bacteria"/>
</dbReference>
<dbReference type="HOGENOM" id="CLU_038505_1_1_3"/>
<dbReference type="OrthoDB" id="4191603at2"/>
<dbReference type="Proteomes" id="UP000001420">
    <property type="component" value="Chromosome"/>
</dbReference>
<dbReference type="GO" id="GO:0045547">
    <property type="term" value="F:ditrans,polycis-polyprenyl diphosphate synthase [(2E,6E)-farnesyl diphosphate specific] activity"/>
    <property type="evidence" value="ECO:0007669"/>
    <property type="project" value="TreeGrafter"/>
</dbReference>
<dbReference type="GO" id="GO:0000287">
    <property type="term" value="F:magnesium ion binding"/>
    <property type="evidence" value="ECO:0007669"/>
    <property type="project" value="UniProtKB-UniRule"/>
</dbReference>
<dbReference type="GO" id="GO:0016094">
    <property type="term" value="P:polyprenol biosynthetic process"/>
    <property type="evidence" value="ECO:0007669"/>
    <property type="project" value="TreeGrafter"/>
</dbReference>
<dbReference type="CDD" id="cd00475">
    <property type="entry name" value="Cis_IPPS"/>
    <property type="match status" value="1"/>
</dbReference>
<dbReference type="FunFam" id="3.40.1180.10:FF:000001">
    <property type="entry name" value="(2E,6E)-farnesyl-diphosphate-specific ditrans,polycis-undecaprenyl-diphosphate synthase"/>
    <property type="match status" value="1"/>
</dbReference>
<dbReference type="Gene3D" id="3.40.1180.10">
    <property type="entry name" value="Decaprenyl diphosphate synthase-like"/>
    <property type="match status" value="1"/>
</dbReference>
<dbReference type="HAMAP" id="MF_01139">
    <property type="entry name" value="ISPT"/>
    <property type="match status" value="1"/>
</dbReference>
<dbReference type="InterPro" id="IPR001441">
    <property type="entry name" value="UPP_synth-like"/>
</dbReference>
<dbReference type="InterPro" id="IPR018520">
    <property type="entry name" value="UPP_synth-like_CS"/>
</dbReference>
<dbReference type="InterPro" id="IPR036424">
    <property type="entry name" value="UPP_synth-like_sf"/>
</dbReference>
<dbReference type="NCBIfam" id="NF011405">
    <property type="entry name" value="PRK14830.1"/>
    <property type="match status" value="1"/>
</dbReference>
<dbReference type="NCBIfam" id="NF011406">
    <property type="entry name" value="PRK14831.1"/>
    <property type="match status" value="1"/>
</dbReference>
<dbReference type="NCBIfam" id="TIGR00055">
    <property type="entry name" value="uppS"/>
    <property type="match status" value="1"/>
</dbReference>
<dbReference type="PANTHER" id="PTHR10291:SF0">
    <property type="entry name" value="DEHYDRODOLICHYL DIPHOSPHATE SYNTHASE 2"/>
    <property type="match status" value="1"/>
</dbReference>
<dbReference type="PANTHER" id="PTHR10291">
    <property type="entry name" value="DEHYDRODOLICHYL DIPHOSPHATE SYNTHASE FAMILY MEMBER"/>
    <property type="match status" value="1"/>
</dbReference>
<dbReference type="Pfam" id="PF01255">
    <property type="entry name" value="Prenyltransf"/>
    <property type="match status" value="1"/>
</dbReference>
<dbReference type="SUPFAM" id="SSF64005">
    <property type="entry name" value="Undecaprenyl diphosphate synthase"/>
    <property type="match status" value="1"/>
</dbReference>
<dbReference type="PROSITE" id="PS01066">
    <property type="entry name" value="UPP_SYNTHASE"/>
    <property type="match status" value="1"/>
</dbReference>